<dbReference type="EC" id="1.7.1.13" evidence="1"/>
<dbReference type="EMBL" id="CP000478">
    <property type="protein sequence ID" value="ABK17666.1"/>
    <property type="molecule type" value="Genomic_DNA"/>
</dbReference>
<dbReference type="RefSeq" id="WP_011698836.1">
    <property type="nucleotide sequence ID" value="NC_008554.1"/>
</dbReference>
<dbReference type="SMR" id="A0LJR4"/>
<dbReference type="STRING" id="335543.Sfum_1983"/>
<dbReference type="KEGG" id="sfu:Sfum_1983"/>
<dbReference type="eggNOG" id="COG0780">
    <property type="taxonomic scope" value="Bacteria"/>
</dbReference>
<dbReference type="HOGENOM" id="CLU_102489_0_1_7"/>
<dbReference type="InParanoid" id="A0LJR4"/>
<dbReference type="OrthoDB" id="9789995at2"/>
<dbReference type="UniPathway" id="UPA00392"/>
<dbReference type="Proteomes" id="UP000001784">
    <property type="component" value="Chromosome"/>
</dbReference>
<dbReference type="GO" id="GO:0005737">
    <property type="term" value="C:cytoplasm"/>
    <property type="evidence" value="ECO:0007669"/>
    <property type="project" value="UniProtKB-SubCell"/>
</dbReference>
<dbReference type="GO" id="GO:0033739">
    <property type="term" value="F:preQ1 synthase activity"/>
    <property type="evidence" value="ECO:0007669"/>
    <property type="project" value="UniProtKB-UniRule"/>
</dbReference>
<dbReference type="GO" id="GO:0008616">
    <property type="term" value="P:queuosine biosynthetic process"/>
    <property type="evidence" value="ECO:0007669"/>
    <property type="project" value="UniProtKB-UniRule"/>
</dbReference>
<dbReference type="GO" id="GO:0006400">
    <property type="term" value="P:tRNA modification"/>
    <property type="evidence" value="ECO:0007669"/>
    <property type="project" value="UniProtKB-UniRule"/>
</dbReference>
<dbReference type="Gene3D" id="3.30.1130.10">
    <property type="match status" value="1"/>
</dbReference>
<dbReference type="HAMAP" id="MF_00818">
    <property type="entry name" value="QueF_type1"/>
    <property type="match status" value="1"/>
</dbReference>
<dbReference type="InterPro" id="IPR043133">
    <property type="entry name" value="GTP-CH-I_C/QueF"/>
</dbReference>
<dbReference type="InterPro" id="IPR050084">
    <property type="entry name" value="NADPH_dep_7-cyano-7-deazaG_red"/>
</dbReference>
<dbReference type="InterPro" id="IPR029500">
    <property type="entry name" value="QueF"/>
</dbReference>
<dbReference type="InterPro" id="IPR016856">
    <property type="entry name" value="QueF_type1"/>
</dbReference>
<dbReference type="NCBIfam" id="TIGR03139">
    <property type="entry name" value="QueF-II"/>
    <property type="match status" value="1"/>
</dbReference>
<dbReference type="PANTHER" id="PTHR34354">
    <property type="entry name" value="NADPH-DEPENDENT 7-CYANO-7-DEAZAGUANINE REDUCTASE"/>
    <property type="match status" value="1"/>
</dbReference>
<dbReference type="PANTHER" id="PTHR34354:SF1">
    <property type="entry name" value="NADPH-DEPENDENT 7-CYANO-7-DEAZAGUANINE REDUCTASE"/>
    <property type="match status" value="1"/>
</dbReference>
<dbReference type="Pfam" id="PF14489">
    <property type="entry name" value="QueF"/>
    <property type="match status" value="1"/>
</dbReference>
<dbReference type="PIRSF" id="PIRSF027377">
    <property type="entry name" value="Nitrile_oxidored_QueF"/>
    <property type="match status" value="1"/>
</dbReference>
<dbReference type="SUPFAM" id="SSF55620">
    <property type="entry name" value="Tetrahydrobiopterin biosynthesis enzymes-like"/>
    <property type="match status" value="1"/>
</dbReference>
<evidence type="ECO:0000255" key="1">
    <source>
        <dbReference type="HAMAP-Rule" id="MF_00818"/>
    </source>
</evidence>
<feature type="chain" id="PRO_1000134312" description="NADPH-dependent 7-cyano-7-deazaguanine reductase">
    <location>
        <begin position="1"/>
        <end position="155"/>
    </location>
</feature>
<feature type="active site" description="Thioimide intermediate" evidence="1">
    <location>
        <position position="52"/>
    </location>
</feature>
<feature type="active site" description="Proton donor" evidence="1">
    <location>
        <position position="59"/>
    </location>
</feature>
<feature type="binding site" evidence="1">
    <location>
        <begin position="74"/>
        <end position="76"/>
    </location>
    <ligand>
        <name>substrate</name>
    </ligand>
</feature>
<feature type="binding site" evidence="1">
    <location>
        <begin position="93"/>
        <end position="94"/>
    </location>
    <ligand>
        <name>substrate</name>
    </ligand>
</feature>
<protein>
    <recommendedName>
        <fullName evidence="1">NADPH-dependent 7-cyano-7-deazaguanine reductase</fullName>
        <ecNumber evidence="1">1.7.1.13</ecNumber>
    </recommendedName>
    <alternativeName>
        <fullName evidence="1">7-cyano-7-carbaguanine reductase</fullName>
    </alternativeName>
    <alternativeName>
        <fullName evidence="1">NADPH-dependent nitrile oxidoreductase</fullName>
    </alternativeName>
    <alternativeName>
        <fullName evidence="1">PreQ(0) reductase</fullName>
    </alternativeName>
</protein>
<organism>
    <name type="scientific">Syntrophobacter fumaroxidans (strain DSM 10017 / MPOB)</name>
    <dbReference type="NCBI Taxonomy" id="335543"/>
    <lineage>
        <taxon>Bacteria</taxon>
        <taxon>Pseudomonadati</taxon>
        <taxon>Thermodesulfobacteriota</taxon>
        <taxon>Syntrophobacteria</taxon>
        <taxon>Syntrophobacterales</taxon>
        <taxon>Syntrophobacteraceae</taxon>
        <taxon>Syntrophobacter</taxon>
    </lineage>
</organism>
<keyword id="KW-0963">Cytoplasm</keyword>
<keyword id="KW-0521">NADP</keyword>
<keyword id="KW-0560">Oxidoreductase</keyword>
<keyword id="KW-0671">Queuosine biosynthesis</keyword>
<keyword id="KW-1185">Reference proteome</keyword>
<reference key="1">
    <citation type="submission" date="2006-10" db="EMBL/GenBank/DDBJ databases">
        <title>Complete sequence of Syntrophobacter fumaroxidans MPOB.</title>
        <authorList>
            <consortium name="US DOE Joint Genome Institute"/>
            <person name="Copeland A."/>
            <person name="Lucas S."/>
            <person name="Lapidus A."/>
            <person name="Barry K."/>
            <person name="Detter J.C."/>
            <person name="Glavina del Rio T."/>
            <person name="Hammon N."/>
            <person name="Israni S."/>
            <person name="Pitluck S."/>
            <person name="Goltsman E.G."/>
            <person name="Martinez M."/>
            <person name="Schmutz J."/>
            <person name="Larimer F."/>
            <person name="Land M."/>
            <person name="Hauser L."/>
            <person name="Kyrpides N."/>
            <person name="Kim E."/>
            <person name="Boone D.R."/>
            <person name="Brockman F."/>
            <person name="Culley D."/>
            <person name="Ferry J."/>
            <person name="Gunsalus R."/>
            <person name="McInerney M.J."/>
            <person name="Morrison M."/>
            <person name="Plugge C."/>
            <person name="Rohlin L."/>
            <person name="Scholten J."/>
            <person name="Sieber J."/>
            <person name="Stams A.J.M."/>
            <person name="Worm P."/>
            <person name="Henstra A.M."/>
            <person name="Richardson P."/>
        </authorList>
    </citation>
    <scope>NUCLEOTIDE SEQUENCE [LARGE SCALE GENOMIC DNA]</scope>
    <source>
        <strain>DSM 10017 / MPOB</strain>
    </source>
</reference>
<gene>
    <name evidence="1" type="primary">queF</name>
    <name type="ordered locus">Sfum_1983</name>
</gene>
<proteinExistence type="inferred from homology"/>
<sequence>MPIDGYSSLTQLGRQAGVPANPDEAVIETFANPHPGTNYTVRLTAPELTTICPITGQPDFATLIVDYVPRDRLVESKSFKLFLGSFRNLGTFHEDCTAYIHKRLSDALDAAFLRVVGLWNARGGITIDCVVQTGELPSNCALLPLGRTDYRTGRI</sequence>
<accession>A0LJR4</accession>
<comment type="function">
    <text evidence="1">Catalyzes the NADPH-dependent reduction of 7-cyano-7-deazaguanine (preQ0) to 7-aminomethyl-7-deazaguanine (preQ1).</text>
</comment>
<comment type="catalytic activity">
    <reaction evidence="1">
        <text>7-aminomethyl-7-carbaguanine + 2 NADP(+) = 7-cyano-7-deazaguanine + 2 NADPH + 3 H(+)</text>
        <dbReference type="Rhea" id="RHEA:13409"/>
        <dbReference type="ChEBI" id="CHEBI:15378"/>
        <dbReference type="ChEBI" id="CHEBI:45075"/>
        <dbReference type="ChEBI" id="CHEBI:57783"/>
        <dbReference type="ChEBI" id="CHEBI:58349"/>
        <dbReference type="ChEBI" id="CHEBI:58703"/>
        <dbReference type="EC" id="1.7.1.13"/>
    </reaction>
</comment>
<comment type="pathway">
    <text evidence="1">tRNA modification; tRNA-queuosine biosynthesis.</text>
</comment>
<comment type="subcellular location">
    <subcellularLocation>
        <location evidence="1">Cytoplasm</location>
    </subcellularLocation>
</comment>
<comment type="similarity">
    <text evidence="1">Belongs to the GTP cyclohydrolase I family. QueF type 1 subfamily.</text>
</comment>
<name>QUEF_SYNFM</name>